<name>RL3_CAEEL</name>
<evidence type="ECO:0000250" key="1"/>
<evidence type="ECO:0000256" key="2">
    <source>
        <dbReference type="SAM" id="MobiDB-lite"/>
    </source>
</evidence>
<evidence type="ECO:0000305" key="3"/>
<protein>
    <recommendedName>
        <fullName evidence="3">Large ribosomal subunit protein uL3</fullName>
    </recommendedName>
    <alternativeName>
        <fullName>60S ribosomal protein L3</fullName>
    </alternativeName>
</protein>
<sequence>MSHRKFSAPRHGHMGFTPKKRSRTYRGRIKAFPKDDKSKPIHLTAFLGYKAGMTHIVRDVDKPGSKVNKKEVVEAVTIVETPPMVIAGVTGYVDTPQGPRALTTIWAEHLSEEARRRFYSNWAKSKKKAFTKYAKKWQDEDGKKLIEADFAKLKKYCSSIRVIAHTQMKILRRRQKKAHLVEIQVNGGTIEQKVDWAREHLEKQVQVDTVFAQDEMIDTIGVTRGHGFKGVTSRWHTKKLPRKTHKGLRKVACIGAWHPSRVAFTVARAGQKGFHHRTIINNKIYRIGKSALTEEGKNNGSTEFDLTQKTITPMGGFPRYGIVNQDYIMLRGAVLGPKKRLITLRKSLITQTKRVAHEKINLKWIDTSSKTGHGRFQTTAEKRAFMGKLKRDFLAEAEAKA</sequence>
<proteinExistence type="evidence at protein level"/>
<comment type="function">
    <text evidence="1">The L3 protein is a component of the large subunit of cytoplasmic ribosomes.</text>
</comment>
<comment type="subcellular location">
    <subcellularLocation>
        <location>Cytoplasm</location>
    </subcellularLocation>
</comment>
<comment type="similarity">
    <text evidence="3">Belongs to the universal ribosomal protein uL3 family.</text>
</comment>
<feature type="chain" id="PRO_0000077235" description="Large ribosomal subunit protein uL3">
    <location>
        <begin position="1"/>
        <end position="401"/>
    </location>
</feature>
<feature type="region of interest" description="Disordered" evidence="2">
    <location>
        <begin position="1"/>
        <end position="22"/>
    </location>
</feature>
<reference key="1">
    <citation type="journal article" date="1996" name="DNA Seq.">
        <title>Nucleotide sequence of ribosomal protein L3 cDNA and the exon-intron structure of L3 gene in the nematode, Caenorhabditis elegans.</title>
        <authorList>
            <person name="Zhu X."/>
            <person name="Joh K."/>
            <person name="Hori K."/>
        </authorList>
    </citation>
    <scope>NUCLEOTIDE SEQUENCE [GENOMIC DNA / MRNA]</scope>
    <source>
        <strain>Bristol N2</strain>
    </source>
</reference>
<reference key="2">
    <citation type="journal article" date="1998" name="Science">
        <title>Genome sequence of the nematode C. elegans: a platform for investigating biology.</title>
        <authorList>
            <consortium name="The C. elegans sequencing consortium"/>
        </authorList>
    </citation>
    <scope>NUCLEOTIDE SEQUENCE [LARGE SCALE GENOMIC DNA]</scope>
    <source>
        <strain>Bristol N2</strain>
    </source>
</reference>
<dbReference type="EMBL" id="Z69337">
    <property type="protein sequence ID" value="CAA93269.1"/>
    <property type="molecule type" value="Genomic_DNA"/>
</dbReference>
<dbReference type="EMBL" id="Z69336">
    <property type="protein sequence ID" value="CAA93268.1"/>
    <property type="molecule type" value="mRNA"/>
</dbReference>
<dbReference type="EMBL" id="Z49936">
    <property type="protein sequence ID" value="CAA90183.1"/>
    <property type="molecule type" value="Genomic_DNA"/>
</dbReference>
<dbReference type="EMBL" id="Z66495">
    <property type="protein sequence ID" value="CAA90183.1"/>
    <property type="status" value="JOINED"/>
    <property type="molecule type" value="Genomic_DNA"/>
</dbReference>
<dbReference type="PIR" id="T19771">
    <property type="entry name" value="T19771"/>
</dbReference>
<dbReference type="RefSeq" id="NP_001021254.1">
    <property type="nucleotide sequence ID" value="NM_001026083.7"/>
</dbReference>
<dbReference type="PDB" id="9BH5">
    <property type="method" value="EM"/>
    <property type="resolution" value="2.63 A"/>
    <property type="chains" value="CB=1-401"/>
</dbReference>
<dbReference type="PDB" id="9CAI">
    <property type="method" value="EM"/>
    <property type="resolution" value="2.59 A"/>
    <property type="chains" value="CB=1-401"/>
</dbReference>
<dbReference type="PDBsum" id="9BH5"/>
<dbReference type="PDBsum" id="9CAI"/>
<dbReference type="EMDB" id="EMD-44533"/>
<dbReference type="EMDB" id="EMD-45392"/>
<dbReference type="SMR" id="P50880"/>
<dbReference type="BioGRID" id="40739">
    <property type="interactions" value="19"/>
</dbReference>
<dbReference type="DIP" id="DIP-24912N"/>
<dbReference type="FunCoup" id="P50880">
    <property type="interactions" value="1006"/>
</dbReference>
<dbReference type="IntAct" id="P50880">
    <property type="interactions" value="1"/>
</dbReference>
<dbReference type="STRING" id="6239.F13B10.2a.1"/>
<dbReference type="PaxDb" id="6239-F13B10.2a.1"/>
<dbReference type="PeptideAtlas" id="P50880"/>
<dbReference type="EnsemblMetazoa" id="F13B10.2a.1">
    <property type="protein sequence ID" value="F13B10.2a.1"/>
    <property type="gene ID" value="WBGene00004414"/>
</dbReference>
<dbReference type="EnsemblMetazoa" id="F13B10.2a.2">
    <property type="protein sequence ID" value="F13B10.2a.2"/>
    <property type="gene ID" value="WBGene00004414"/>
</dbReference>
<dbReference type="GeneID" id="175501"/>
<dbReference type="KEGG" id="cel:CELE_F13B10.2"/>
<dbReference type="UCSC" id="F13B10.2d.2">
    <property type="organism name" value="c. elegans"/>
</dbReference>
<dbReference type="AGR" id="WB:WBGene00004414"/>
<dbReference type="CTD" id="175501"/>
<dbReference type="WormBase" id="F13B10.2a">
    <property type="protein sequence ID" value="CE05598"/>
    <property type="gene ID" value="WBGene00004414"/>
    <property type="gene designation" value="rpl-3"/>
</dbReference>
<dbReference type="eggNOG" id="KOG0746">
    <property type="taxonomic scope" value="Eukaryota"/>
</dbReference>
<dbReference type="GeneTree" id="ENSGT00390000017606"/>
<dbReference type="InParanoid" id="P50880"/>
<dbReference type="OMA" id="QRTEYNK"/>
<dbReference type="OrthoDB" id="1611972at2759"/>
<dbReference type="PhylomeDB" id="P50880"/>
<dbReference type="Reactome" id="R-CEL-156827">
    <property type="pathway name" value="L13a-mediated translational silencing of Ceruloplasmin expression"/>
</dbReference>
<dbReference type="Reactome" id="R-CEL-1799339">
    <property type="pathway name" value="SRP-dependent cotranslational protein targeting to membrane"/>
</dbReference>
<dbReference type="Reactome" id="R-CEL-72689">
    <property type="pathway name" value="Formation of a pool of free 40S subunits"/>
</dbReference>
<dbReference type="Reactome" id="R-CEL-72706">
    <property type="pathway name" value="GTP hydrolysis and joining of the 60S ribosomal subunit"/>
</dbReference>
<dbReference type="Reactome" id="R-CEL-975956">
    <property type="pathway name" value="Nonsense Mediated Decay (NMD) independent of the Exon Junction Complex (EJC)"/>
</dbReference>
<dbReference type="Reactome" id="R-CEL-975957">
    <property type="pathway name" value="Nonsense Mediated Decay (NMD) enhanced by the Exon Junction Complex (EJC)"/>
</dbReference>
<dbReference type="SignaLink" id="P50880"/>
<dbReference type="PRO" id="PR:P50880"/>
<dbReference type="Proteomes" id="UP000001940">
    <property type="component" value="Chromosome III"/>
</dbReference>
<dbReference type="Bgee" id="WBGene00004414">
    <property type="expression patterns" value="Expressed in germ line (C elegans) and 4 other cell types or tissues"/>
</dbReference>
<dbReference type="ExpressionAtlas" id="P50880">
    <property type="expression patterns" value="baseline and differential"/>
</dbReference>
<dbReference type="GO" id="GO:0022625">
    <property type="term" value="C:cytosolic large ribosomal subunit"/>
    <property type="evidence" value="ECO:0000318"/>
    <property type="project" value="GO_Central"/>
</dbReference>
<dbReference type="GO" id="GO:0003723">
    <property type="term" value="F:RNA binding"/>
    <property type="evidence" value="ECO:0000318"/>
    <property type="project" value="GO_Central"/>
</dbReference>
<dbReference type="GO" id="GO:0003735">
    <property type="term" value="F:structural constituent of ribosome"/>
    <property type="evidence" value="ECO:0000318"/>
    <property type="project" value="GO_Central"/>
</dbReference>
<dbReference type="GO" id="GO:0006412">
    <property type="term" value="P:translation"/>
    <property type="evidence" value="ECO:0000318"/>
    <property type="project" value="GO_Central"/>
</dbReference>
<dbReference type="FunFam" id="2.40.30.10:FF:000079">
    <property type="entry name" value="60S ribosomal protein L3"/>
    <property type="match status" value="1"/>
</dbReference>
<dbReference type="FunFam" id="3.30.1430.10:FF:000001">
    <property type="entry name" value="60S ribosomal protein L3"/>
    <property type="match status" value="1"/>
</dbReference>
<dbReference type="FunFam" id="4.10.960.10:FF:000002">
    <property type="entry name" value="60S ribosomal protein L3"/>
    <property type="match status" value="1"/>
</dbReference>
<dbReference type="FunFam" id="2.40.30.10:FF:000351">
    <property type="entry name" value="Ribosomal protein L3"/>
    <property type="match status" value="1"/>
</dbReference>
<dbReference type="Gene3D" id="3.30.1430.10">
    <property type="match status" value="1"/>
</dbReference>
<dbReference type="Gene3D" id="4.10.960.10">
    <property type="entry name" value="Ribosomal protein L3, domain 3"/>
    <property type="match status" value="1"/>
</dbReference>
<dbReference type="Gene3D" id="2.40.30.10">
    <property type="entry name" value="Translation factors"/>
    <property type="match status" value="1"/>
</dbReference>
<dbReference type="InterPro" id="IPR045077">
    <property type="entry name" value="L3_arc_euk"/>
</dbReference>
<dbReference type="InterPro" id="IPR044892">
    <property type="entry name" value="Ribosomal_L3_dom_3_arc_sf"/>
</dbReference>
<dbReference type="InterPro" id="IPR000597">
    <property type="entry name" value="Ribosomal_uL3"/>
</dbReference>
<dbReference type="InterPro" id="IPR019926">
    <property type="entry name" value="Ribosomal_uL3_CS"/>
</dbReference>
<dbReference type="InterPro" id="IPR009000">
    <property type="entry name" value="Transl_B-barrel_sf"/>
</dbReference>
<dbReference type="PANTHER" id="PTHR11363">
    <property type="entry name" value="60S RIBOSOMAL PROTEIN L3-RELATED"/>
    <property type="match status" value="1"/>
</dbReference>
<dbReference type="PANTHER" id="PTHR11363:SF5">
    <property type="entry name" value="LARGE RIBOSOMAL SUBUNIT PROTEIN UL3"/>
    <property type="match status" value="1"/>
</dbReference>
<dbReference type="Pfam" id="PF00297">
    <property type="entry name" value="Ribosomal_L3"/>
    <property type="match status" value="1"/>
</dbReference>
<dbReference type="SUPFAM" id="SSF50447">
    <property type="entry name" value="Translation proteins"/>
    <property type="match status" value="1"/>
</dbReference>
<dbReference type="PROSITE" id="PS00474">
    <property type="entry name" value="RIBOSOMAL_L3"/>
    <property type="match status" value="1"/>
</dbReference>
<accession>P50880</accession>
<organism>
    <name type="scientific">Caenorhabditis elegans</name>
    <dbReference type="NCBI Taxonomy" id="6239"/>
    <lineage>
        <taxon>Eukaryota</taxon>
        <taxon>Metazoa</taxon>
        <taxon>Ecdysozoa</taxon>
        <taxon>Nematoda</taxon>
        <taxon>Chromadorea</taxon>
        <taxon>Rhabditida</taxon>
        <taxon>Rhabditina</taxon>
        <taxon>Rhabditomorpha</taxon>
        <taxon>Rhabditoidea</taxon>
        <taxon>Rhabditidae</taxon>
        <taxon>Peloderinae</taxon>
        <taxon>Caenorhabditis</taxon>
    </lineage>
</organism>
<keyword id="KW-0002">3D-structure</keyword>
<keyword id="KW-0963">Cytoplasm</keyword>
<keyword id="KW-1185">Reference proteome</keyword>
<keyword id="KW-0687">Ribonucleoprotein</keyword>
<keyword id="KW-0689">Ribosomal protein</keyword>
<gene>
    <name type="primary">rpl-3</name>
    <name type="ORF">F13B10.2</name>
</gene>